<feature type="chain" id="PRO_0000171889" description="Putative membrane protein insertion efficiency factor">
    <location>
        <begin position="1"/>
        <end position="79"/>
    </location>
</feature>
<evidence type="ECO:0000255" key="1">
    <source>
        <dbReference type="HAMAP-Rule" id="MF_00386"/>
    </source>
</evidence>
<proteinExistence type="inferred from homology"/>
<sequence length="79" mass="8915">MMKKLLLTLIKLYRILISPLFPPSCRFQPTCSQYALDAVEIHGVWRGSCLALKRILRCHPLHPGGYDPVPNPEQGKISS</sequence>
<organism>
    <name type="scientific">Synechocystis sp. (strain ATCC 27184 / PCC 6803 / Kazusa)</name>
    <dbReference type="NCBI Taxonomy" id="1111708"/>
    <lineage>
        <taxon>Bacteria</taxon>
        <taxon>Bacillati</taxon>
        <taxon>Cyanobacteriota</taxon>
        <taxon>Cyanophyceae</taxon>
        <taxon>Synechococcales</taxon>
        <taxon>Merismopediaceae</taxon>
        <taxon>Synechocystis</taxon>
    </lineage>
</organism>
<protein>
    <recommendedName>
        <fullName evidence="1">Putative membrane protein insertion efficiency factor</fullName>
    </recommendedName>
</protein>
<comment type="function">
    <text evidence="1">Could be involved in insertion of integral membrane proteins into the membrane.</text>
</comment>
<comment type="subcellular location">
    <subcellularLocation>
        <location evidence="1">Cell inner membrane</location>
        <topology evidence="1">Peripheral membrane protein</topology>
        <orientation evidence="1">Cytoplasmic side</orientation>
    </subcellularLocation>
</comment>
<comment type="similarity">
    <text evidence="1">Belongs to the UPF0161 family.</text>
</comment>
<dbReference type="EMBL" id="BA000022">
    <property type="protein sequence ID" value="BAA10437.1"/>
    <property type="molecule type" value="Genomic_DNA"/>
</dbReference>
<dbReference type="PIR" id="S76591">
    <property type="entry name" value="S76591"/>
</dbReference>
<dbReference type="FunCoup" id="Q55785">
    <property type="interactions" value="269"/>
</dbReference>
<dbReference type="IntAct" id="Q55785">
    <property type="interactions" value="5"/>
</dbReference>
<dbReference type="STRING" id="1148.gene:10499938"/>
<dbReference type="PaxDb" id="1148-1001699"/>
<dbReference type="EnsemblBacteria" id="BAA10437">
    <property type="protein sequence ID" value="BAA10437"/>
    <property type="gene ID" value="BAA10437"/>
</dbReference>
<dbReference type="KEGG" id="syn:ssl0331"/>
<dbReference type="eggNOG" id="COG0759">
    <property type="taxonomic scope" value="Bacteria"/>
</dbReference>
<dbReference type="InParanoid" id="Q55785"/>
<dbReference type="PhylomeDB" id="Q55785"/>
<dbReference type="Proteomes" id="UP000001425">
    <property type="component" value="Chromosome"/>
</dbReference>
<dbReference type="GO" id="GO:0005886">
    <property type="term" value="C:plasma membrane"/>
    <property type="evidence" value="ECO:0007669"/>
    <property type="project" value="UniProtKB-SubCell"/>
</dbReference>
<dbReference type="HAMAP" id="MF_00386">
    <property type="entry name" value="UPF0161_YidD"/>
    <property type="match status" value="1"/>
</dbReference>
<dbReference type="InterPro" id="IPR002696">
    <property type="entry name" value="Membr_insert_effic_factor_YidD"/>
</dbReference>
<dbReference type="NCBIfam" id="TIGR00278">
    <property type="entry name" value="membrane protein insertion efficiency factor YidD"/>
    <property type="match status" value="1"/>
</dbReference>
<dbReference type="PANTHER" id="PTHR33383">
    <property type="entry name" value="MEMBRANE PROTEIN INSERTION EFFICIENCY FACTOR-RELATED"/>
    <property type="match status" value="1"/>
</dbReference>
<dbReference type="PANTHER" id="PTHR33383:SF1">
    <property type="entry name" value="MEMBRANE PROTEIN INSERTION EFFICIENCY FACTOR-RELATED"/>
    <property type="match status" value="1"/>
</dbReference>
<dbReference type="Pfam" id="PF01809">
    <property type="entry name" value="YidD"/>
    <property type="match status" value="1"/>
</dbReference>
<dbReference type="SMART" id="SM01234">
    <property type="entry name" value="Haemolytic"/>
    <property type="match status" value="1"/>
</dbReference>
<reference key="1">
    <citation type="journal article" date="1995" name="DNA Res.">
        <title>Sequence analysis of the genome of the unicellular cyanobacterium Synechocystis sp. strain PCC6803. I. Sequence features in the 1 Mb region from map positions 64% to 92% of the genome.</title>
        <authorList>
            <person name="Kaneko T."/>
            <person name="Tanaka A."/>
            <person name="Sato S."/>
            <person name="Kotani H."/>
            <person name="Sazuka T."/>
            <person name="Miyajima N."/>
            <person name="Sugiura M."/>
            <person name="Tabata S."/>
        </authorList>
    </citation>
    <scope>NUCLEOTIDE SEQUENCE [LARGE SCALE GENOMIC DNA]</scope>
    <source>
        <strain>ATCC 27184 / PCC 6803 / N-1</strain>
    </source>
</reference>
<reference key="2">
    <citation type="journal article" date="1996" name="DNA Res.">
        <title>Sequence analysis of the genome of the unicellular cyanobacterium Synechocystis sp. strain PCC6803. II. Sequence determination of the entire genome and assignment of potential protein-coding regions.</title>
        <authorList>
            <person name="Kaneko T."/>
            <person name="Sato S."/>
            <person name="Kotani H."/>
            <person name="Tanaka A."/>
            <person name="Asamizu E."/>
            <person name="Nakamura Y."/>
            <person name="Miyajima N."/>
            <person name="Hirosawa M."/>
            <person name="Sugiura M."/>
            <person name="Sasamoto S."/>
            <person name="Kimura T."/>
            <person name="Hosouchi T."/>
            <person name="Matsuno A."/>
            <person name="Muraki A."/>
            <person name="Nakazaki N."/>
            <person name="Naruo K."/>
            <person name="Okumura S."/>
            <person name="Shimpo S."/>
            <person name="Takeuchi C."/>
            <person name="Wada T."/>
            <person name="Watanabe A."/>
            <person name="Yamada M."/>
            <person name="Yasuda M."/>
            <person name="Tabata S."/>
        </authorList>
    </citation>
    <scope>NUCLEOTIDE SEQUENCE [LARGE SCALE GENOMIC DNA]</scope>
    <source>
        <strain>ATCC 27184 / PCC 6803 / Kazusa</strain>
    </source>
</reference>
<accession>Q55785</accession>
<name>YIDD_SYNY3</name>
<gene>
    <name type="ordered locus">ssl0331</name>
</gene>
<keyword id="KW-0997">Cell inner membrane</keyword>
<keyword id="KW-1003">Cell membrane</keyword>
<keyword id="KW-0472">Membrane</keyword>
<keyword id="KW-1185">Reference proteome</keyword>